<protein>
    <recommendedName>
        <fullName>L-olivosyl-oleandolide 3-O-methyltransferase</fullName>
        <ecNumber evidence="4">2.1.1.239</ecNumber>
    </recommendedName>
    <alternativeName>
        <fullName evidence="6">Oleandomycin biosynthesis protein Y</fullName>
    </alternativeName>
</protein>
<dbReference type="EC" id="2.1.1.239" evidence="4"/>
<dbReference type="EMBL" id="AJ002638">
    <property type="protein sequence ID" value="CAA05644.1"/>
    <property type="molecule type" value="Genomic_DNA"/>
</dbReference>
<dbReference type="SMR" id="O87833"/>
<dbReference type="KEGG" id="ag:CAA05644"/>
<dbReference type="BioCyc" id="MetaCyc:MONOMER-17057"/>
<dbReference type="BRENDA" id="2.1.1.239">
    <property type="organism ID" value="5974"/>
</dbReference>
<dbReference type="GO" id="GO:0046872">
    <property type="term" value="F:metal ion binding"/>
    <property type="evidence" value="ECO:0007669"/>
    <property type="project" value="UniProtKB-KW"/>
</dbReference>
<dbReference type="GO" id="GO:0042803">
    <property type="term" value="F:protein homodimerization activity"/>
    <property type="evidence" value="ECO:0000314"/>
    <property type="project" value="UniProtKB"/>
</dbReference>
<dbReference type="GO" id="GO:0008757">
    <property type="term" value="F:S-adenosylmethionine-dependent methyltransferase activity"/>
    <property type="evidence" value="ECO:0000314"/>
    <property type="project" value="UniProtKB"/>
</dbReference>
<dbReference type="GO" id="GO:0017000">
    <property type="term" value="P:antibiotic biosynthetic process"/>
    <property type="evidence" value="ECO:0000314"/>
    <property type="project" value="UniProtKB"/>
</dbReference>
<dbReference type="GO" id="GO:0032259">
    <property type="term" value="P:methylation"/>
    <property type="evidence" value="ECO:0000314"/>
    <property type="project" value="UniProtKB"/>
</dbReference>
<dbReference type="Gene3D" id="3.30.1050.30">
    <property type="match status" value="1"/>
</dbReference>
<dbReference type="Gene3D" id="3.40.50.150">
    <property type="entry name" value="Vaccinia Virus protein VP39"/>
    <property type="match status" value="1"/>
</dbReference>
<dbReference type="InterPro" id="IPR040800">
    <property type="entry name" value="MycE_N"/>
</dbReference>
<dbReference type="InterPro" id="IPR029063">
    <property type="entry name" value="SAM-dependent_MTases_sf"/>
</dbReference>
<dbReference type="Pfam" id="PF17843">
    <property type="entry name" value="MycE_N"/>
    <property type="match status" value="1"/>
</dbReference>
<dbReference type="SUPFAM" id="SSF53335">
    <property type="entry name" value="S-adenosyl-L-methionine-dependent methyltransferases"/>
    <property type="match status" value="1"/>
</dbReference>
<accession>O87833</accession>
<keyword id="KW-0045">Antibiotic biosynthesis</keyword>
<keyword id="KW-0460">Magnesium</keyword>
<keyword id="KW-0479">Metal-binding</keyword>
<keyword id="KW-0489">Methyltransferase</keyword>
<keyword id="KW-0949">S-adenosyl-L-methionine</keyword>
<keyword id="KW-0808">Transferase</keyword>
<organism>
    <name type="scientific">Streptomyces antibioticus</name>
    <dbReference type="NCBI Taxonomy" id="1890"/>
    <lineage>
        <taxon>Bacteria</taxon>
        <taxon>Bacillati</taxon>
        <taxon>Actinomycetota</taxon>
        <taxon>Actinomycetes</taxon>
        <taxon>Kitasatosporales</taxon>
        <taxon>Streptomycetaceae</taxon>
        <taxon>Streptomyces</taxon>
    </lineage>
</organism>
<gene>
    <name type="primary">oleY</name>
</gene>
<name>OLEY_STRAT</name>
<proteinExistence type="evidence at protein level"/>
<feature type="chain" id="PRO_0000418458" description="L-olivosyl-oleandolide 3-O-methyltransferase">
    <location>
        <begin position="1"/>
        <end position="386"/>
    </location>
</feature>
<feature type="region of interest" description="Disordered" evidence="3">
    <location>
        <begin position="364"/>
        <end position="386"/>
    </location>
</feature>
<feature type="active site" description="Proton acceptor" evidence="2">
    <location>
        <position position="271"/>
    </location>
</feature>
<feature type="binding site" evidence="1">
    <location>
        <position position="166"/>
    </location>
    <ligand>
        <name>S-adenosyl-L-methionine</name>
        <dbReference type="ChEBI" id="CHEBI:59789"/>
    </ligand>
</feature>
<feature type="binding site" evidence="2">
    <location>
        <begin position="195"/>
        <end position="201"/>
    </location>
    <ligand>
        <name>S-adenosyl-L-methionine</name>
        <dbReference type="ChEBI" id="CHEBI:59789"/>
    </ligand>
</feature>
<feature type="binding site" evidence="2">
    <location>
        <position position="210"/>
    </location>
    <ligand>
        <name>S-adenosyl-L-methionine</name>
        <dbReference type="ChEBI" id="CHEBI:59789"/>
    </ligand>
</feature>
<feature type="binding site" evidence="2">
    <location>
        <position position="227"/>
    </location>
    <ligand>
        <name>S-adenosyl-L-methionine</name>
        <dbReference type="ChEBI" id="CHEBI:59789"/>
    </ligand>
</feature>
<feature type="binding site" evidence="2">
    <location>
        <begin position="245"/>
        <end position="246"/>
    </location>
    <ligand>
        <name>S-adenosyl-L-methionine</name>
        <dbReference type="ChEBI" id="CHEBI:59789"/>
    </ligand>
</feature>
<feature type="binding site" evidence="2">
    <location>
        <position position="268"/>
    </location>
    <ligand>
        <name>Mg(2+)</name>
        <dbReference type="ChEBI" id="CHEBI:18420"/>
    </ligand>
</feature>
<feature type="binding site" evidence="2">
    <location>
        <position position="268"/>
    </location>
    <ligand>
        <name>S-adenosyl-L-methionine</name>
        <dbReference type="ChEBI" id="CHEBI:59789"/>
    </ligand>
</feature>
<feature type="binding site" evidence="2">
    <location>
        <position position="296"/>
    </location>
    <ligand>
        <name>Mg(2+)</name>
        <dbReference type="ChEBI" id="CHEBI:18420"/>
    </ligand>
</feature>
<feature type="binding site" evidence="2">
    <location>
        <position position="297"/>
    </location>
    <ligand>
        <name>Mg(2+)</name>
        <dbReference type="ChEBI" id="CHEBI:18420"/>
    </ligand>
</feature>
<comment type="function">
    <text evidence="4">3-O-methyltransferase involved in the synthesis of L-oleandrose, a sugar attached to oleandomycin, a macrolide antibiotic. Acts on monoglycosylated macrolactones and mediates the conversion of L-olivosyl-erythronolide B into its 3-O-methylated derivative, L-oleandrosyl-erythronolide B. Also able to methylate other monoglycosylated derivatives, such as L-rhamnosyl- and L-mycarosyl-erythronolide B.</text>
</comment>
<comment type="catalytic activity">
    <reaction evidence="4">
        <text>L-olivosyl-oleandolide + S-adenosyl-L-methionine = L-oleandrosyl-oleandolide + S-adenosyl-L-homocysteine + H(+)</text>
        <dbReference type="Rhea" id="RHEA:31623"/>
        <dbReference type="ChEBI" id="CHEBI:15378"/>
        <dbReference type="ChEBI" id="CHEBI:29613"/>
        <dbReference type="ChEBI" id="CHEBI:29614"/>
        <dbReference type="ChEBI" id="CHEBI:57856"/>
        <dbReference type="ChEBI" id="CHEBI:59789"/>
        <dbReference type="EC" id="2.1.1.239"/>
    </reaction>
</comment>
<comment type="cofactor">
    <cofactor evidence="2">
        <name>Mg(2+)</name>
        <dbReference type="ChEBI" id="CHEBI:18420"/>
    </cofactor>
</comment>
<comment type="biophysicochemical properties">
    <phDependence>
        <text evidence="4">Optimum pH is 7.2-7.6.</text>
    </phDependence>
</comment>
<comment type="pathway">
    <text evidence="5">Antibiotic biosynthesis.</text>
</comment>
<comment type="subunit">
    <text evidence="4">Homodimer.</text>
</comment>
<comment type="similarity">
    <text evidence="6">Belongs to the methyltransferase OleY/MycE family.</text>
</comment>
<reference key="1">
    <citation type="journal article" date="1998" name="Mol. Gen. Genet.">
        <title>Analysis of a Streptomyces antibioticus chromosomal region involved in oleandomycin biosynthesis, which encodes two glycosyltransferases responsible for glycosylation of the macrolactone ring.</title>
        <authorList>
            <person name="Olano C."/>
            <person name="Rodriguez A.M."/>
            <person name="Michel J.M."/>
            <person name="Mendez C."/>
            <person name="Raynal M.C."/>
            <person name="Salas J.A."/>
        </authorList>
    </citation>
    <scope>NUCLEOTIDE SEQUENCE [GENOMIC DNA]</scope>
    <scope>PATHWAY</scope>
    <source>
        <strain>ATCC 11891 / DSM 40868 / BCRC 11580 / NCIMB 11506 / PSA 205</strain>
    </source>
</reference>
<reference key="2">
    <citation type="journal article" date="2001" name="J. Bacteriol.">
        <title>Functional analysis of OleY L-oleandrosyl 3-O-methyltransferase of the oleandomycin biosynthetic pathway in Streptomyces antibioticus.</title>
        <authorList>
            <person name="Rodriguez L."/>
            <person name="Rodriguez D."/>
            <person name="Olano C."/>
            <person name="Brana A.F."/>
            <person name="Mendez C."/>
            <person name="Salas J.A."/>
        </authorList>
    </citation>
    <scope>FUNCTION</scope>
    <scope>CATALYTIC ACTIVITY</scope>
    <scope>SUBUNIT</scope>
    <scope>BIOPHYSICOCHEMICAL PROPERTIES</scope>
    <source>
        <strain>ATCC 11891 / DSM 40868 / BCRC 11580 / NCIMB 11506 / PSA 205</strain>
    </source>
</reference>
<sequence length="386" mass="42439">MSYDDHAVLEAILRCAGGDERFLLNTVEEWGAAEITAALVDELLFRCEIPQVGGEAFIGLDVLHGADRISHVLQVTDGKPVTSAEPAGQELGGRTWSSRSATLLRELFGPPSGRTAGGFGVSFLPDLRGPRTMEGAALAARATNVVLHATTNETPPLDRLALRYESDKWGGVHWFTGHYDRHLRAVRDQAVRILEIGIGGYDDLLPSGASLKMWKRYFPRGLVFGVDIFDSRRATSRVSRRSAARQDDPEFMRRVAEEHGPFDVIIDDGSHINAHMRTSFSVMFPHLRNGGFYVIEDTFTSYWPGYGGPSGARCPSGTTALEMVKGLIDSVHYEERPDGAATADYIARNLVGLHAYQTTSSSSRRAINKEGGIPHTVPREPFWNDN</sequence>
<evidence type="ECO:0000250" key="1"/>
<evidence type="ECO:0000250" key="2">
    <source>
        <dbReference type="UniProtKB" id="Q83WF2"/>
    </source>
</evidence>
<evidence type="ECO:0000256" key="3">
    <source>
        <dbReference type="SAM" id="MobiDB-lite"/>
    </source>
</evidence>
<evidence type="ECO:0000269" key="4">
    <source>
    </source>
</evidence>
<evidence type="ECO:0000269" key="5">
    <source>
    </source>
</evidence>
<evidence type="ECO:0000305" key="6"/>